<evidence type="ECO:0000255" key="1">
    <source>
        <dbReference type="HAMAP-Rule" id="MF_01200"/>
    </source>
</evidence>
<reference key="1">
    <citation type="journal article" date="2008" name="Biol. Direct">
        <title>Complete genome sequence of the extremely acidophilic methanotroph isolate V4, Methylacidiphilum infernorum, a representative of the bacterial phylum Verrucomicrobia.</title>
        <authorList>
            <person name="Hou S."/>
            <person name="Makarova K.S."/>
            <person name="Saw J.H."/>
            <person name="Senin P."/>
            <person name="Ly B.V."/>
            <person name="Zhou Z."/>
            <person name="Ren Y."/>
            <person name="Wang J."/>
            <person name="Galperin M.Y."/>
            <person name="Omelchenko M.V."/>
            <person name="Wolf Y.I."/>
            <person name="Yutin N."/>
            <person name="Koonin E.V."/>
            <person name="Stott M.B."/>
            <person name="Mountain B.W."/>
            <person name="Crowe M.A."/>
            <person name="Smirnova A.V."/>
            <person name="Dunfield P.F."/>
            <person name="Feng L."/>
            <person name="Wang L."/>
            <person name="Alam M."/>
        </authorList>
    </citation>
    <scope>NUCLEOTIDE SEQUENCE [LARGE SCALE GENOMIC DNA]</scope>
    <source>
        <strain>Isolate V4</strain>
    </source>
</reference>
<proteinExistence type="inferred from homology"/>
<feature type="chain" id="PRO_1000164576" description="Orotidine 5'-phosphate decarboxylase">
    <location>
        <begin position="1"/>
        <end position="230"/>
    </location>
</feature>
<feature type="active site" description="Proton donor" evidence="1">
    <location>
        <position position="61"/>
    </location>
</feature>
<feature type="binding site" evidence="1">
    <location>
        <position position="10"/>
    </location>
    <ligand>
        <name>substrate</name>
    </ligand>
</feature>
<feature type="binding site" evidence="1">
    <location>
        <position position="32"/>
    </location>
    <ligand>
        <name>substrate</name>
    </ligand>
</feature>
<feature type="binding site" evidence="1">
    <location>
        <begin position="59"/>
        <end position="68"/>
    </location>
    <ligand>
        <name>substrate</name>
    </ligand>
</feature>
<feature type="binding site" evidence="1">
    <location>
        <position position="116"/>
    </location>
    <ligand>
        <name>substrate</name>
    </ligand>
</feature>
<feature type="binding site" evidence="1">
    <location>
        <position position="177"/>
    </location>
    <ligand>
        <name>substrate</name>
    </ligand>
</feature>
<feature type="binding site" evidence="1">
    <location>
        <position position="186"/>
    </location>
    <ligand>
        <name>substrate</name>
    </ligand>
</feature>
<feature type="binding site" evidence="1">
    <location>
        <position position="206"/>
    </location>
    <ligand>
        <name>substrate</name>
    </ligand>
</feature>
<feature type="binding site" evidence="1">
    <location>
        <position position="207"/>
    </location>
    <ligand>
        <name>substrate</name>
    </ligand>
</feature>
<comment type="function">
    <text evidence="1">Catalyzes the decarboxylation of orotidine 5'-monophosphate (OMP) to uridine 5'-monophosphate (UMP).</text>
</comment>
<comment type="catalytic activity">
    <reaction evidence="1">
        <text>orotidine 5'-phosphate + H(+) = UMP + CO2</text>
        <dbReference type="Rhea" id="RHEA:11596"/>
        <dbReference type="ChEBI" id="CHEBI:15378"/>
        <dbReference type="ChEBI" id="CHEBI:16526"/>
        <dbReference type="ChEBI" id="CHEBI:57538"/>
        <dbReference type="ChEBI" id="CHEBI:57865"/>
        <dbReference type="EC" id="4.1.1.23"/>
    </reaction>
</comment>
<comment type="pathway">
    <text evidence="1">Pyrimidine metabolism; UMP biosynthesis via de novo pathway; UMP from orotate: step 2/2.</text>
</comment>
<comment type="subunit">
    <text evidence="1">Homodimer.</text>
</comment>
<comment type="similarity">
    <text evidence="1">Belongs to the OMP decarboxylase family. Type 1 subfamily.</text>
</comment>
<keyword id="KW-0210">Decarboxylase</keyword>
<keyword id="KW-0456">Lyase</keyword>
<keyword id="KW-0665">Pyrimidine biosynthesis</keyword>
<organism>
    <name type="scientific">Methylacidiphilum infernorum (isolate V4)</name>
    <name type="common">Methylokorus infernorum (strain V4)</name>
    <dbReference type="NCBI Taxonomy" id="481448"/>
    <lineage>
        <taxon>Bacteria</taxon>
        <taxon>Pseudomonadati</taxon>
        <taxon>Verrucomicrobiota</taxon>
        <taxon>Methylacidiphilae</taxon>
        <taxon>Methylacidiphilales</taxon>
        <taxon>Methylacidiphilaceae</taxon>
        <taxon>Methylacidiphilum (ex Ratnadevi et al. 2023)</taxon>
    </lineage>
</organism>
<protein>
    <recommendedName>
        <fullName evidence="1">Orotidine 5'-phosphate decarboxylase</fullName>
        <ecNumber evidence="1">4.1.1.23</ecNumber>
    </recommendedName>
    <alternativeName>
        <fullName evidence="1">OMP decarboxylase</fullName>
        <shortName evidence="1">OMPDCase</shortName>
        <shortName evidence="1">OMPdecase</shortName>
    </alternativeName>
</protein>
<name>PYRF_METI4</name>
<dbReference type="EC" id="4.1.1.23" evidence="1"/>
<dbReference type="EMBL" id="CP000975">
    <property type="protein sequence ID" value="ACD83339.1"/>
    <property type="molecule type" value="Genomic_DNA"/>
</dbReference>
<dbReference type="RefSeq" id="WP_012463621.1">
    <property type="nucleotide sequence ID" value="NC_010794.1"/>
</dbReference>
<dbReference type="SMR" id="B3DVI6"/>
<dbReference type="STRING" id="481448.Minf_1285"/>
<dbReference type="KEGG" id="min:Minf_1285"/>
<dbReference type="eggNOG" id="COG0284">
    <property type="taxonomic scope" value="Bacteria"/>
</dbReference>
<dbReference type="HOGENOM" id="CLU_067069_0_0_0"/>
<dbReference type="OrthoDB" id="9806203at2"/>
<dbReference type="UniPathway" id="UPA00070">
    <property type="reaction ID" value="UER00120"/>
</dbReference>
<dbReference type="Proteomes" id="UP000009149">
    <property type="component" value="Chromosome"/>
</dbReference>
<dbReference type="GO" id="GO:0005829">
    <property type="term" value="C:cytosol"/>
    <property type="evidence" value="ECO:0007669"/>
    <property type="project" value="TreeGrafter"/>
</dbReference>
<dbReference type="GO" id="GO:0004590">
    <property type="term" value="F:orotidine-5'-phosphate decarboxylase activity"/>
    <property type="evidence" value="ECO:0007669"/>
    <property type="project" value="UniProtKB-UniRule"/>
</dbReference>
<dbReference type="GO" id="GO:0006207">
    <property type="term" value="P:'de novo' pyrimidine nucleobase biosynthetic process"/>
    <property type="evidence" value="ECO:0007669"/>
    <property type="project" value="InterPro"/>
</dbReference>
<dbReference type="GO" id="GO:0044205">
    <property type="term" value="P:'de novo' UMP biosynthetic process"/>
    <property type="evidence" value="ECO:0007669"/>
    <property type="project" value="UniProtKB-UniRule"/>
</dbReference>
<dbReference type="CDD" id="cd04725">
    <property type="entry name" value="OMP_decarboxylase_like"/>
    <property type="match status" value="1"/>
</dbReference>
<dbReference type="Gene3D" id="3.20.20.70">
    <property type="entry name" value="Aldolase class I"/>
    <property type="match status" value="1"/>
</dbReference>
<dbReference type="HAMAP" id="MF_01200_B">
    <property type="entry name" value="OMPdecase_type1_B"/>
    <property type="match status" value="1"/>
</dbReference>
<dbReference type="InterPro" id="IPR013785">
    <property type="entry name" value="Aldolase_TIM"/>
</dbReference>
<dbReference type="InterPro" id="IPR014732">
    <property type="entry name" value="OMPdecase"/>
</dbReference>
<dbReference type="InterPro" id="IPR018089">
    <property type="entry name" value="OMPdecase_AS"/>
</dbReference>
<dbReference type="InterPro" id="IPR047596">
    <property type="entry name" value="OMPdecase_bac"/>
</dbReference>
<dbReference type="InterPro" id="IPR001754">
    <property type="entry name" value="OMPdeCOase_dom"/>
</dbReference>
<dbReference type="InterPro" id="IPR011060">
    <property type="entry name" value="RibuloseP-bd_barrel"/>
</dbReference>
<dbReference type="NCBIfam" id="NF001273">
    <property type="entry name" value="PRK00230.1"/>
    <property type="match status" value="1"/>
</dbReference>
<dbReference type="NCBIfam" id="TIGR01740">
    <property type="entry name" value="pyrF"/>
    <property type="match status" value="1"/>
</dbReference>
<dbReference type="PANTHER" id="PTHR32119">
    <property type="entry name" value="OROTIDINE 5'-PHOSPHATE DECARBOXYLASE"/>
    <property type="match status" value="1"/>
</dbReference>
<dbReference type="PANTHER" id="PTHR32119:SF2">
    <property type="entry name" value="OROTIDINE 5'-PHOSPHATE DECARBOXYLASE"/>
    <property type="match status" value="1"/>
</dbReference>
<dbReference type="Pfam" id="PF00215">
    <property type="entry name" value="OMPdecase"/>
    <property type="match status" value="1"/>
</dbReference>
<dbReference type="SMART" id="SM00934">
    <property type="entry name" value="OMPdecase"/>
    <property type="match status" value="1"/>
</dbReference>
<dbReference type="SUPFAM" id="SSF51366">
    <property type="entry name" value="Ribulose-phoshate binding barrel"/>
    <property type="match status" value="1"/>
</dbReference>
<dbReference type="PROSITE" id="PS00156">
    <property type="entry name" value="OMPDECASE"/>
    <property type="match status" value="1"/>
</dbReference>
<accession>B3DVI6</accession>
<sequence length="230" mass="24929">MDLKPIVALDLPDPSEALKLVHLLRPHIDFFKVGSQLFLAGGTDIIRRIIDCGADVFLDLKFHDIPRTVFRAVTEVVKLKVKFTTVHILGGREMLKEALEASAGSDTEILGVTVLTSMDDRGLESIGIAHAVEEEVLLLASMALEVGLRGIVCSGKELPLLGKLKKRASILVVPGIRWRGAAAYDQKRIIEPGEAKKGGATHVVVGRPILEAHDKVGLVQKLLCELNAIN</sequence>
<gene>
    <name evidence="1" type="primary">pyrF</name>
    <name type="ordered locus">Minf_1285</name>
</gene>